<sequence>MDRSSAVGGCGGGGGLGVGVVTSSATALGPGGLTNGGGGVVSGALNGLEAMSAESTGLCLQDLVSAGTANGAGSAGSAESATTTSTALSSGSTGSSTVNGGGSSTSGTEHLHSHHSLHDSSSSVSISPAISSLMPISSLSHLHHSAGQDLVGGYSQHPHHTVVPPHTPKHEPLEKLRIWAETGDFRDSHSSMTAVANSLDSTHLNNFQTSSTSSISNRSRDRKDGNRSVNETTIKTENISSSGHDEPMTTSGEEPKNDKKNKRQRRQRTHFTSQQLQELEHTFSRNRYPDMSTREEIAMWTNLTEARVRVWFKNRRAKWRKRERNAMNAAVAAADFKSGFGTQFMQPFADDSLYSSYPYNNWTKVPSPLGTKPFPWPVNPLGSMVAGNHHQNSVNCFNTGASGVAVSMNNASMLPGSMGSSLSNTSNVGAVGAPCPYTTPANPYMYRSAAEPCMSSSMSSSIATLRLKAKQHASAGFGSPYSAPSPVSRSNSAGLSACQYTGVGVTDVV</sequence>
<evidence type="ECO:0000255" key="1"/>
<evidence type="ECO:0000255" key="2">
    <source>
        <dbReference type="PROSITE-ProRule" id="PRU00108"/>
    </source>
</evidence>
<evidence type="ECO:0000255" key="3">
    <source>
        <dbReference type="PROSITE-ProRule" id="PRU00138"/>
    </source>
</evidence>
<evidence type="ECO:0000256" key="4">
    <source>
        <dbReference type="SAM" id="MobiDB-lite"/>
    </source>
</evidence>
<evidence type="ECO:0000269" key="5">
    <source>
    </source>
</evidence>
<evidence type="ECO:0000305" key="6"/>
<dbReference type="EMBL" id="AJ001519">
    <property type="protein sequence ID" value="CAA04801.1"/>
    <property type="molecule type" value="mRNA"/>
</dbReference>
<dbReference type="EMBL" id="AE014297">
    <property type="protein sequence ID" value="AAF57099.3"/>
    <property type="molecule type" value="Genomic_DNA"/>
</dbReference>
<dbReference type="EMBL" id="BT009990">
    <property type="protein sequence ID" value="AAQ22459.1"/>
    <property type="molecule type" value="mRNA"/>
</dbReference>
<dbReference type="RefSeq" id="NP_733410.2">
    <property type="nucleotide sequence ID" value="NM_170531.4"/>
</dbReference>
<dbReference type="SMR" id="O18400"/>
<dbReference type="BioGRID" id="68514">
    <property type="interactions" value="26"/>
</dbReference>
<dbReference type="FunCoup" id="O18400">
    <property type="interactions" value="20"/>
</dbReference>
<dbReference type="IntAct" id="O18400">
    <property type="interactions" value="23"/>
</dbReference>
<dbReference type="STRING" id="7227.FBpp0303127"/>
<dbReference type="PaxDb" id="7227-FBpp0271894"/>
<dbReference type="DNASU" id="43664"/>
<dbReference type="EnsemblMetazoa" id="FBtr0089389">
    <property type="protein sequence ID" value="FBpp0088412"/>
    <property type="gene ID" value="FBgn0020912"/>
</dbReference>
<dbReference type="GeneID" id="43664"/>
<dbReference type="KEGG" id="dme:Dmel_CG1447"/>
<dbReference type="UCSC" id="CG1447-RA">
    <property type="organism name" value="d. melanogaster"/>
</dbReference>
<dbReference type="AGR" id="FB:FBgn0020912"/>
<dbReference type="CTD" id="43664"/>
<dbReference type="FlyBase" id="FBgn0020912">
    <property type="gene designation" value="Ptx1"/>
</dbReference>
<dbReference type="VEuPathDB" id="VectorBase:FBgn0020912"/>
<dbReference type="eggNOG" id="KOG0486">
    <property type="taxonomic scope" value="Eukaryota"/>
</dbReference>
<dbReference type="GeneTree" id="ENSGT00940000168132"/>
<dbReference type="HOGENOM" id="CLU_030301_3_1_1"/>
<dbReference type="InParanoid" id="O18400"/>
<dbReference type="OMA" id="HQDEGNH"/>
<dbReference type="OrthoDB" id="6159439at2759"/>
<dbReference type="PhylomeDB" id="O18400"/>
<dbReference type="BioGRID-ORCS" id="43664">
    <property type="hits" value="0 hits in 3 CRISPR screens"/>
</dbReference>
<dbReference type="ChiTaRS" id="Ptx1">
    <property type="organism name" value="fly"/>
</dbReference>
<dbReference type="GenomeRNAi" id="43664"/>
<dbReference type="PRO" id="PR:O18400"/>
<dbReference type="Proteomes" id="UP000000803">
    <property type="component" value="Chromosome 3R"/>
</dbReference>
<dbReference type="Bgee" id="FBgn0020912">
    <property type="expression patterns" value="Expressed in adult middle midgut class II enteroendocrine cell in adult midgut (Drosophila) and 66 other cell types or tissues"/>
</dbReference>
<dbReference type="ExpressionAtlas" id="O18400">
    <property type="expression patterns" value="baseline and differential"/>
</dbReference>
<dbReference type="GO" id="GO:0005634">
    <property type="term" value="C:nucleus"/>
    <property type="evidence" value="ECO:0000314"/>
    <property type="project" value="FlyBase"/>
</dbReference>
<dbReference type="GO" id="GO:0005667">
    <property type="term" value="C:transcription regulator complex"/>
    <property type="evidence" value="ECO:0000250"/>
    <property type="project" value="FlyBase"/>
</dbReference>
<dbReference type="GO" id="GO:0003700">
    <property type="term" value="F:DNA-binding transcription factor activity"/>
    <property type="evidence" value="ECO:0000250"/>
    <property type="project" value="FlyBase"/>
</dbReference>
<dbReference type="GO" id="GO:0000981">
    <property type="term" value="F:DNA-binding transcription factor activity, RNA polymerase II-specific"/>
    <property type="evidence" value="ECO:0000318"/>
    <property type="project" value="GO_Central"/>
</dbReference>
<dbReference type="GO" id="GO:0000978">
    <property type="term" value="F:RNA polymerase II cis-regulatory region sequence-specific DNA binding"/>
    <property type="evidence" value="ECO:0000318"/>
    <property type="project" value="GO_Central"/>
</dbReference>
<dbReference type="GO" id="GO:0043565">
    <property type="term" value="F:sequence-specific DNA binding"/>
    <property type="evidence" value="ECO:0000250"/>
    <property type="project" value="FlyBase"/>
</dbReference>
<dbReference type="GO" id="GO:0009653">
    <property type="term" value="P:anatomical structure morphogenesis"/>
    <property type="evidence" value="ECO:0000318"/>
    <property type="project" value="GO_Central"/>
</dbReference>
<dbReference type="GO" id="GO:0006357">
    <property type="term" value="P:regulation of transcription by RNA polymerase II"/>
    <property type="evidence" value="ECO:0000250"/>
    <property type="project" value="FlyBase"/>
</dbReference>
<dbReference type="CDD" id="cd00086">
    <property type="entry name" value="homeodomain"/>
    <property type="match status" value="1"/>
</dbReference>
<dbReference type="FunFam" id="1.10.10.60:FF:000031">
    <property type="entry name" value="Homeobox protein"/>
    <property type="match status" value="1"/>
</dbReference>
<dbReference type="Gene3D" id="1.10.10.60">
    <property type="entry name" value="Homeodomain-like"/>
    <property type="match status" value="1"/>
</dbReference>
<dbReference type="InterPro" id="IPR001356">
    <property type="entry name" value="HD"/>
</dbReference>
<dbReference type="InterPro" id="IPR017970">
    <property type="entry name" value="Homeobox_CS"/>
</dbReference>
<dbReference type="InterPro" id="IPR009057">
    <property type="entry name" value="Homeodomain-like_sf"/>
</dbReference>
<dbReference type="InterPro" id="IPR003654">
    <property type="entry name" value="OAR_dom"/>
</dbReference>
<dbReference type="PANTHER" id="PTHR45882">
    <property type="entry name" value="PITUITARY HOMEOBOX HOMOLOG PTX1"/>
    <property type="match status" value="1"/>
</dbReference>
<dbReference type="PANTHER" id="PTHR45882:SF3">
    <property type="entry name" value="PITUITARY HOMEOBOX HOMOLOG PTX1"/>
    <property type="match status" value="1"/>
</dbReference>
<dbReference type="Pfam" id="PF00046">
    <property type="entry name" value="Homeodomain"/>
    <property type="match status" value="1"/>
</dbReference>
<dbReference type="Pfam" id="PF03826">
    <property type="entry name" value="OAR"/>
    <property type="match status" value="1"/>
</dbReference>
<dbReference type="SMART" id="SM00389">
    <property type="entry name" value="HOX"/>
    <property type="match status" value="1"/>
</dbReference>
<dbReference type="SUPFAM" id="SSF46689">
    <property type="entry name" value="Homeodomain-like"/>
    <property type="match status" value="1"/>
</dbReference>
<dbReference type="PROSITE" id="PS00027">
    <property type="entry name" value="HOMEOBOX_1"/>
    <property type="match status" value="1"/>
</dbReference>
<dbReference type="PROSITE" id="PS50071">
    <property type="entry name" value="HOMEOBOX_2"/>
    <property type="match status" value="1"/>
</dbReference>
<dbReference type="PROSITE" id="PS50803">
    <property type="entry name" value="OAR"/>
    <property type="match status" value="1"/>
</dbReference>
<feature type="chain" id="PRO_0000049233" description="Pituitary homeobox homolog Ptx1">
    <location>
        <begin position="1"/>
        <end position="509"/>
    </location>
</feature>
<feature type="DNA-binding region" description="Homeobox" evidence="2">
    <location>
        <begin position="262"/>
        <end position="322"/>
    </location>
</feature>
<feature type="region of interest" description="Disordered" evidence="4">
    <location>
        <begin position="70"/>
        <end position="125"/>
    </location>
</feature>
<feature type="region of interest" description="Disordered" evidence="4">
    <location>
        <begin position="148"/>
        <end position="171"/>
    </location>
</feature>
<feature type="region of interest" description="Disordered" evidence="4">
    <location>
        <begin position="204"/>
        <end position="273"/>
    </location>
</feature>
<feature type="short sequence motif" description="OAR" evidence="3">
    <location>
        <begin position="460"/>
        <end position="473"/>
    </location>
</feature>
<feature type="short sequence motif" description="Nuclear localization signal" evidence="1">
    <location>
        <begin position="464"/>
        <end position="470"/>
    </location>
</feature>
<feature type="compositionally biased region" description="Low complexity" evidence="4">
    <location>
        <begin position="70"/>
        <end position="98"/>
    </location>
</feature>
<feature type="compositionally biased region" description="Polar residues" evidence="4">
    <location>
        <begin position="227"/>
        <end position="242"/>
    </location>
</feature>
<feature type="compositionally biased region" description="Basic and acidic residues" evidence="4">
    <location>
        <begin position="243"/>
        <end position="258"/>
    </location>
</feature>
<feature type="compositionally biased region" description="Basic residues" evidence="4">
    <location>
        <begin position="259"/>
        <end position="269"/>
    </location>
</feature>
<feature type="sequence conflict" description="In Ref. 1; CAA04801." evidence="6" ref="1">
    <original>GCGGGGGLGVGVVTSSATALGPGGLTNGGGGVVSGALNGLE</original>
    <variation>LRRGRRSGSGRGHQLGHGLGTGWPDQRGRRSGQWRTQRIG</variation>
    <location>
        <begin position="9"/>
        <end position="49"/>
    </location>
</feature>
<feature type="sequence conflict" description="In Ref. 1; CAA04801." evidence="6" ref="1">
    <original>T</original>
    <variation>A</variation>
    <location>
        <position position="108"/>
    </location>
</feature>
<feature type="sequence conflict" description="In Ref. 1; CAA04801." evidence="6" ref="1">
    <original>I</original>
    <variation>SLFFSV</variation>
    <location>
        <position position="178"/>
    </location>
</feature>
<feature type="sequence conflict" description="In Ref. 1; CAA04801." evidence="6" ref="1">
    <original>F</original>
    <variation>S</variation>
    <location>
        <position position="283"/>
    </location>
</feature>
<gene>
    <name type="primary">Ptx1</name>
    <name type="ORF">CG1447</name>
</gene>
<keyword id="KW-0010">Activator</keyword>
<keyword id="KW-0217">Developmental protein</keyword>
<keyword id="KW-0238">DNA-binding</keyword>
<keyword id="KW-0371">Homeobox</keyword>
<keyword id="KW-0539">Nucleus</keyword>
<keyword id="KW-1185">Reference proteome</keyword>
<keyword id="KW-0804">Transcription</keyword>
<keyword id="KW-0805">Transcription regulation</keyword>
<reference key="1">
    <citation type="journal article" date="1997" name="Mech. Dev.">
        <title>Embryonic expression and characterization of a Ptx1 homolog in Drosophila.</title>
        <authorList>
            <person name="Vorbrueggen G."/>
            <person name="Constien R."/>
            <person name="Zilian O."/>
            <person name="Wimmer E.A."/>
            <person name="Dowe G."/>
            <person name="Taubert H."/>
            <person name="Noll M."/>
            <person name="Jaeckle H."/>
        </authorList>
    </citation>
    <scope>NUCLEOTIDE SEQUENCE [MRNA]</scope>
    <scope>FUNCTION</scope>
    <scope>DEVELOPMENTAL STAGE</scope>
    <scope>SUBCELLULAR LOCATION</scope>
    <source>
        <tissue>Embryo</tissue>
    </source>
</reference>
<reference key="2">
    <citation type="journal article" date="2000" name="Science">
        <title>The genome sequence of Drosophila melanogaster.</title>
        <authorList>
            <person name="Adams M.D."/>
            <person name="Celniker S.E."/>
            <person name="Holt R.A."/>
            <person name="Evans C.A."/>
            <person name="Gocayne J.D."/>
            <person name="Amanatides P.G."/>
            <person name="Scherer S.E."/>
            <person name="Li P.W."/>
            <person name="Hoskins R.A."/>
            <person name="Galle R.F."/>
            <person name="George R.A."/>
            <person name="Lewis S.E."/>
            <person name="Richards S."/>
            <person name="Ashburner M."/>
            <person name="Henderson S.N."/>
            <person name="Sutton G.G."/>
            <person name="Wortman J.R."/>
            <person name="Yandell M.D."/>
            <person name="Zhang Q."/>
            <person name="Chen L.X."/>
            <person name="Brandon R.C."/>
            <person name="Rogers Y.-H.C."/>
            <person name="Blazej R.G."/>
            <person name="Champe M."/>
            <person name="Pfeiffer B.D."/>
            <person name="Wan K.H."/>
            <person name="Doyle C."/>
            <person name="Baxter E.G."/>
            <person name="Helt G."/>
            <person name="Nelson C.R."/>
            <person name="Miklos G.L.G."/>
            <person name="Abril J.F."/>
            <person name="Agbayani A."/>
            <person name="An H.-J."/>
            <person name="Andrews-Pfannkoch C."/>
            <person name="Baldwin D."/>
            <person name="Ballew R.M."/>
            <person name="Basu A."/>
            <person name="Baxendale J."/>
            <person name="Bayraktaroglu L."/>
            <person name="Beasley E.M."/>
            <person name="Beeson K.Y."/>
            <person name="Benos P.V."/>
            <person name="Berman B.P."/>
            <person name="Bhandari D."/>
            <person name="Bolshakov S."/>
            <person name="Borkova D."/>
            <person name="Botchan M.R."/>
            <person name="Bouck J."/>
            <person name="Brokstein P."/>
            <person name="Brottier P."/>
            <person name="Burtis K.C."/>
            <person name="Busam D.A."/>
            <person name="Butler H."/>
            <person name="Cadieu E."/>
            <person name="Center A."/>
            <person name="Chandra I."/>
            <person name="Cherry J.M."/>
            <person name="Cawley S."/>
            <person name="Dahlke C."/>
            <person name="Davenport L.B."/>
            <person name="Davies P."/>
            <person name="de Pablos B."/>
            <person name="Delcher A."/>
            <person name="Deng Z."/>
            <person name="Mays A.D."/>
            <person name="Dew I."/>
            <person name="Dietz S.M."/>
            <person name="Dodson K."/>
            <person name="Doup L.E."/>
            <person name="Downes M."/>
            <person name="Dugan-Rocha S."/>
            <person name="Dunkov B.C."/>
            <person name="Dunn P."/>
            <person name="Durbin K.J."/>
            <person name="Evangelista C.C."/>
            <person name="Ferraz C."/>
            <person name="Ferriera S."/>
            <person name="Fleischmann W."/>
            <person name="Fosler C."/>
            <person name="Gabrielian A.E."/>
            <person name="Garg N.S."/>
            <person name="Gelbart W.M."/>
            <person name="Glasser K."/>
            <person name="Glodek A."/>
            <person name="Gong F."/>
            <person name="Gorrell J.H."/>
            <person name="Gu Z."/>
            <person name="Guan P."/>
            <person name="Harris M."/>
            <person name="Harris N.L."/>
            <person name="Harvey D.A."/>
            <person name="Heiman T.J."/>
            <person name="Hernandez J.R."/>
            <person name="Houck J."/>
            <person name="Hostin D."/>
            <person name="Houston K.A."/>
            <person name="Howland T.J."/>
            <person name="Wei M.-H."/>
            <person name="Ibegwam C."/>
            <person name="Jalali M."/>
            <person name="Kalush F."/>
            <person name="Karpen G.H."/>
            <person name="Ke Z."/>
            <person name="Kennison J.A."/>
            <person name="Ketchum K.A."/>
            <person name="Kimmel B.E."/>
            <person name="Kodira C.D."/>
            <person name="Kraft C.L."/>
            <person name="Kravitz S."/>
            <person name="Kulp D."/>
            <person name="Lai Z."/>
            <person name="Lasko P."/>
            <person name="Lei Y."/>
            <person name="Levitsky A.A."/>
            <person name="Li J.H."/>
            <person name="Li Z."/>
            <person name="Liang Y."/>
            <person name="Lin X."/>
            <person name="Liu X."/>
            <person name="Mattei B."/>
            <person name="McIntosh T.C."/>
            <person name="McLeod M.P."/>
            <person name="McPherson D."/>
            <person name="Merkulov G."/>
            <person name="Milshina N.V."/>
            <person name="Mobarry C."/>
            <person name="Morris J."/>
            <person name="Moshrefi A."/>
            <person name="Mount S.M."/>
            <person name="Moy M."/>
            <person name="Murphy B."/>
            <person name="Murphy L."/>
            <person name="Muzny D.M."/>
            <person name="Nelson D.L."/>
            <person name="Nelson D.R."/>
            <person name="Nelson K.A."/>
            <person name="Nixon K."/>
            <person name="Nusskern D.R."/>
            <person name="Pacleb J.M."/>
            <person name="Palazzolo M."/>
            <person name="Pittman G.S."/>
            <person name="Pan S."/>
            <person name="Pollard J."/>
            <person name="Puri V."/>
            <person name="Reese M.G."/>
            <person name="Reinert K."/>
            <person name="Remington K."/>
            <person name="Saunders R.D.C."/>
            <person name="Scheeler F."/>
            <person name="Shen H."/>
            <person name="Shue B.C."/>
            <person name="Siden-Kiamos I."/>
            <person name="Simpson M."/>
            <person name="Skupski M.P."/>
            <person name="Smith T.J."/>
            <person name="Spier E."/>
            <person name="Spradling A.C."/>
            <person name="Stapleton M."/>
            <person name="Strong R."/>
            <person name="Sun E."/>
            <person name="Svirskas R."/>
            <person name="Tector C."/>
            <person name="Turner R."/>
            <person name="Venter E."/>
            <person name="Wang A.H."/>
            <person name="Wang X."/>
            <person name="Wang Z.-Y."/>
            <person name="Wassarman D.A."/>
            <person name="Weinstock G.M."/>
            <person name="Weissenbach J."/>
            <person name="Williams S.M."/>
            <person name="Woodage T."/>
            <person name="Worley K.C."/>
            <person name="Wu D."/>
            <person name="Yang S."/>
            <person name="Yao Q.A."/>
            <person name="Ye J."/>
            <person name="Yeh R.-F."/>
            <person name="Zaveri J.S."/>
            <person name="Zhan M."/>
            <person name="Zhang G."/>
            <person name="Zhao Q."/>
            <person name="Zheng L."/>
            <person name="Zheng X.H."/>
            <person name="Zhong F.N."/>
            <person name="Zhong W."/>
            <person name="Zhou X."/>
            <person name="Zhu S.C."/>
            <person name="Zhu X."/>
            <person name="Smith H.O."/>
            <person name="Gibbs R.A."/>
            <person name="Myers E.W."/>
            <person name="Rubin G.M."/>
            <person name="Venter J.C."/>
        </authorList>
    </citation>
    <scope>NUCLEOTIDE SEQUENCE [LARGE SCALE GENOMIC DNA]</scope>
    <source>
        <strain>Berkeley</strain>
    </source>
</reference>
<reference key="3">
    <citation type="journal article" date="2002" name="Genome Biol.">
        <title>Annotation of the Drosophila melanogaster euchromatic genome: a systematic review.</title>
        <authorList>
            <person name="Misra S."/>
            <person name="Crosby M.A."/>
            <person name="Mungall C.J."/>
            <person name="Matthews B.B."/>
            <person name="Campbell K.S."/>
            <person name="Hradecky P."/>
            <person name="Huang Y."/>
            <person name="Kaminker J.S."/>
            <person name="Millburn G.H."/>
            <person name="Prochnik S.E."/>
            <person name="Smith C.D."/>
            <person name="Tupy J.L."/>
            <person name="Whitfield E.J."/>
            <person name="Bayraktaroglu L."/>
            <person name="Berman B.P."/>
            <person name="Bettencourt B.R."/>
            <person name="Celniker S.E."/>
            <person name="de Grey A.D.N.J."/>
            <person name="Drysdale R.A."/>
            <person name="Harris N.L."/>
            <person name="Richter J."/>
            <person name="Russo S."/>
            <person name="Schroeder A.J."/>
            <person name="Shu S.Q."/>
            <person name="Stapleton M."/>
            <person name="Yamada C."/>
            <person name="Ashburner M."/>
            <person name="Gelbart W.M."/>
            <person name="Rubin G.M."/>
            <person name="Lewis S.E."/>
        </authorList>
    </citation>
    <scope>GENOME REANNOTATION</scope>
    <source>
        <strain>Berkeley</strain>
    </source>
</reference>
<reference key="4">
    <citation type="submission" date="2003-08" db="EMBL/GenBank/DDBJ databases">
        <authorList>
            <person name="Stapleton M."/>
            <person name="Brokstein P."/>
            <person name="Hong L."/>
            <person name="Agbayani A."/>
            <person name="Carlson J.W."/>
            <person name="Champe M."/>
            <person name="Chavez C."/>
            <person name="Dorsett V."/>
            <person name="Dresnek D."/>
            <person name="Farfan D."/>
            <person name="Frise E."/>
            <person name="George R.A."/>
            <person name="Gonzalez M."/>
            <person name="Guarin H."/>
            <person name="Kronmiller B."/>
            <person name="Li P.W."/>
            <person name="Liao G."/>
            <person name="Miranda A."/>
            <person name="Mungall C.J."/>
            <person name="Nunoo J."/>
            <person name="Pacleb J.M."/>
            <person name="Paragas V."/>
            <person name="Park S."/>
            <person name="Patel S."/>
            <person name="Phouanenavong S."/>
            <person name="Wan K.H."/>
            <person name="Yu C."/>
            <person name="Lewis S.E."/>
            <person name="Rubin G.M."/>
            <person name="Celniker S.E."/>
        </authorList>
    </citation>
    <scope>NUCLEOTIDE SEQUENCE [LARGE SCALE MRNA]</scope>
    <source>
        <strain>Berkeley</strain>
        <tissue>Embryo</tissue>
    </source>
</reference>
<organism>
    <name type="scientific">Drosophila melanogaster</name>
    <name type="common">Fruit fly</name>
    <dbReference type="NCBI Taxonomy" id="7227"/>
    <lineage>
        <taxon>Eukaryota</taxon>
        <taxon>Metazoa</taxon>
        <taxon>Ecdysozoa</taxon>
        <taxon>Arthropoda</taxon>
        <taxon>Hexapoda</taxon>
        <taxon>Insecta</taxon>
        <taxon>Pterygota</taxon>
        <taxon>Neoptera</taxon>
        <taxon>Endopterygota</taxon>
        <taxon>Diptera</taxon>
        <taxon>Brachycera</taxon>
        <taxon>Muscomorpha</taxon>
        <taxon>Ephydroidea</taxon>
        <taxon>Drosophilidae</taxon>
        <taxon>Drosophila</taxon>
        <taxon>Sophophora</taxon>
    </lineage>
</organism>
<comment type="function">
    <text evidence="5">Appears to control physiological cell functions rather than pattern formation during embryogenesis.</text>
</comment>
<comment type="subcellular location">
    <subcellularLocation>
        <location evidence="2 3 5">Nucleus</location>
    </subcellularLocation>
</comment>
<comment type="developmental stage">
    <text evidence="5">First detected in the posterior region of the blastoderm embryo. In later stages of embryonic development, detected in the posterior portion of the midgut, in the developing malpighian tubules, in a subset of ventral somatic muscles, in the developing CNS and in Bolwig's organ.</text>
</comment>
<comment type="similarity">
    <text evidence="6">Belongs to the paired homeobox family. Bicoid subfamily.</text>
</comment>
<name>PITX_DROME</name>
<proteinExistence type="evidence at transcript level"/>
<protein>
    <recommendedName>
        <fullName>Pituitary homeobox homolog Ptx1</fullName>
        <shortName>D-PTX1</shortName>
    </recommendedName>
</protein>
<accession>O18400</accession>
<accession>Q9VA26</accession>